<dbReference type="EMBL" id="AM286415">
    <property type="protein sequence ID" value="CAL12577.1"/>
    <property type="molecule type" value="Genomic_DNA"/>
</dbReference>
<dbReference type="RefSeq" id="WP_005160376.1">
    <property type="nucleotide sequence ID" value="NC_008800.1"/>
</dbReference>
<dbReference type="RefSeq" id="YP_001006740.1">
    <property type="nucleotide sequence ID" value="NC_008800.1"/>
</dbReference>
<dbReference type="SMR" id="A1JSU2"/>
<dbReference type="GeneID" id="31409479"/>
<dbReference type="KEGG" id="yen:YE2536"/>
<dbReference type="PATRIC" id="fig|393305.7.peg.2691"/>
<dbReference type="eggNOG" id="COG1677">
    <property type="taxonomic scope" value="Bacteria"/>
</dbReference>
<dbReference type="HOGENOM" id="CLU_147249_0_2_6"/>
<dbReference type="OrthoDB" id="8909229at2"/>
<dbReference type="Proteomes" id="UP000000642">
    <property type="component" value="Chromosome"/>
</dbReference>
<dbReference type="GO" id="GO:0009425">
    <property type="term" value="C:bacterial-type flagellum basal body"/>
    <property type="evidence" value="ECO:0007669"/>
    <property type="project" value="UniProtKB-SubCell"/>
</dbReference>
<dbReference type="GO" id="GO:0003774">
    <property type="term" value="F:cytoskeletal motor activity"/>
    <property type="evidence" value="ECO:0007669"/>
    <property type="project" value="InterPro"/>
</dbReference>
<dbReference type="GO" id="GO:0005198">
    <property type="term" value="F:structural molecule activity"/>
    <property type="evidence" value="ECO:0007669"/>
    <property type="project" value="InterPro"/>
</dbReference>
<dbReference type="GO" id="GO:0071973">
    <property type="term" value="P:bacterial-type flagellum-dependent cell motility"/>
    <property type="evidence" value="ECO:0007669"/>
    <property type="project" value="InterPro"/>
</dbReference>
<dbReference type="HAMAP" id="MF_00724">
    <property type="entry name" value="FliE"/>
    <property type="match status" value="1"/>
</dbReference>
<dbReference type="InterPro" id="IPR001624">
    <property type="entry name" value="FliE"/>
</dbReference>
<dbReference type="NCBIfam" id="TIGR00205">
    <property type="entry name" value="fliE"/>
    <property type="match status" value="1"/>
</dbReference>
<dbReference type="PANTHER" id="PTHR34653">
    <property type="match status" value="1"/>
</dbReference>
<dbReference type="PANTHER" id="PTHR34653:SF1">
    <property type="entry name" value="FLAGELLAR HOOK-BASAL BODY COMPLEX PROTEIN FLIE"/>
    <property type="match status" value="1"/>
</dbReference>
<dbReference type="Pfam" id="PF02049">
    <property type="entry name" value="FliE"/>
    <property type="match status" value="1"/>
</dbReference>
<dbReference type="PRINTS" id="PR01006">
    <property type="entry name" value="FLGHOOKFLIE"/>
</dbReference>
<sequence>MSVQGIEGVLQQLQVTALQASGSAKTLPAEAGFASELKAAIGKISENQQTARTLAQNFELGVPGVGINDVMVNMQKSSVSLQLGIQVRNKLVAAYQDVMNMGV</sequence>
<comment type="subcellular location">
    <subcellularLocation>
        <location evidence="1">Bacterial flagellum basal body</location>
    </subcellularLocation>
</comment>
<comment type="similarity">
    <text evidence="1">Belongs to the FliE family.</text>
</comment>
<reference key="1">
    <citation type="journal article" date="2006" name="PLoS Genet.">
        <title>The complete genome sequence and comparative genome analysis of the high pathogenicity Yersinia enterocolitica strain 8081.</title>
        <authorList>
            <person name="Thomson N.R."/>
            <person name="Howard S."/>
            <person name="Wren B.W."/>
            <person name="Holden M.T.G."/>
            <person name="Crossman L."/>
            <person name="Challis G.L."/>
            <person name="Churcher C."/>
            <person name="Mungall K."/>
            <person name="Brooks K."/>
            <person name="Chillingworth T."/>
            <person name="Feltwell T."/>
            <person name="Abdellah Z."/>
            <person name="Hauser H."/>
            <person name="Jagels K."/>
            <person name="Maddison M."/>
            <person name="Moule S."/>
            <person name="Sanders M."/>
            <person name="Whitehead S."/>
            <person name="Quail M.A."/>
            <person name="Dougan G."/>
            <person name="Parkhill J."/>
            <person name="Prentice M.B."/>
        </authorList>
    </citation>
    <scope>NUCLEOTIDE SEQUENCE [LARGE SCALE GENOMIC DNA]</scope>
    <source>
        <strain>NCTC 13174 / 8081</strain>
    </source>
</reference>
<proteinExistence type="inferred from homology"/>
<feature type="chain" id="PRO_1000045881" description="Flagellar hook-basal body complex protein FliE">
    <location>
        <begin position="1"/>
        <end position="103"/>
    </location>
</feature>
<gene>
    <name evidence="1" type="primary">fliE</name>
    <name type="ordered locus">YE2536</name>
</gene>
<organism>
    <name type="scientific">Yersinia enterocolitica serotype O:8 / biotype 1B (strain NCTC 13174 / 8081)</name>
    <dbReference type="NCBI Taxonomy" id="393305"/>
    <lineage>
        <taxon>Bacteria</taxon>
        <taxon>Pseudomonadati</taxon>
        <taxon>Pseudomonadota</taxon>
        <taxon>Gammaproteobacteria</taxon>
        <taxon>Enterobacterales</taxon>
        <taxon>Yersiniaceae</taxon>
        <taxon>Yersinia</taxon>
    </lineage>
</organism>
<evidence type="ECO:0000255" key="1">
    <source>
        <dbReference type="HAMAP-Rule" id="MF_00724"/>
    </source>
</evidence>
<keyword id="KW-0975">Bacterial flagellum</keyword>
<accession>A1JSU2</accession>
<protein>
    <recommendedName>
        <fullName evidence="1">Flagellar hook-basal body complex protein FliE</fullName>
    </recommendedName>
</protein>
<name>FLIE_YERE8</name>